<reference key="1">
    <citation type="journal article" date="2009" name="Proc. Natl. Acad. Sci. U.S.A.">
        <title>The genomic basis of trophic strategy in marine bacteria.</title>
        <authorList>
            <person name="Lauro F.M."/>
            <person name="McDougald D."/>
            <person name="Thomas T."/>
            <person name="Williams T.J."/>
            <person name="Egan S."/>
            <person name="Rice S."/>
            <person name="DeMaere M.Z."/>
            <person name="Ting L."/>
            <person name="Ertan H."/>
            <person name="Johnson J."/>
            <person name="Ferriera S."/>
            <person name="Lapidus A."/>
            <person name="Anderson I."/>
            <person name="Kyrpides N."/>
            <person name="Munk A.C."/>
            <person name="Detter C."/>
            <person name="Han C.S."/>
            <person name="Brown M.V."/>
            <person name="Robb F.T."/>
            <person name="Kjelleberg S."/>
            <person name="Cavicchioli R."/>
        </authorList>
    </citation>
    <scope>NUCLEOTIDE SEQUENCE [LARGE SCALE GENOMIC DNA]</scope>
    <source>
        <strain>DSM 13593 / LMG 18877 / RB2256</strain>
    </source>
</reference>
<name>SYV_SPHAL</name>
<gene>
    <name evidence="1" type="primary">valS</name>
    <name type="ordered locus">Sala_0932</name>
</gene>
<evidence type="ECO:0000255" key="1">
    <source>
        <dbReference type="HAMAP-Rule" id="MF_02004"/>
    </source>
</evidence>
<evidence type="ECO:0000256" key="2">
    <source>
        <dbReference type="SAM" id="MobiDB-lite"/>
    </source>
</evidence>
<organism>
    <name type="scientific">Sphingopyxis alaskensis (strain DSM 13593 / LMG 18877 / RB2256)</name>
    <name type="common">Sphingomonas alaskensis</name>
    <dbReference type="NCBI Taxonomy" id="317655"/>
    <lineage>
        <taxon>Bacteria</taxon>
        <taxon>Pseudomonadati</taxon>
        <taxon>Pseudomonadota</taxon>
        <taxon>Alphaproteobacteria</taxon>
        <taxon>Sphingomonadales</taxon>
        <taxon>Sphingomonadaceae</taxon>
        <taxon>Sphingopyxis</taxon>
    </lineage>
</organism>
<proteinExistence type="inferred from homology"/>
<comment type="function">
    <text evidence="1">Catalyzes the attachment of valine to tRNA(Val). As ValRS can inadvertently accommodate and process structurally similar amino acids such as threonine, to avoid such errors, it has a 'posttransfer' editing activity that hydrolyzes mischarged Thr-tRNA(Val) in a tRNA-dependent manner.</text>
</comment>
<comment type="catalytic activity">
    <reaction evidence="1">
        <text>tRNA(Val) + L-valine + ATP = L-valyl-tRNA(Val) + AMP + diphosphate</text>
        <dbReference type="Rhea" id="RHEA:10704"/>
        <dbReference type="Rhea" id="RHEA-COMP:9672"/>
        <dbReference type="Rhea" id="RHEA-COMP:9708"/>
        <dbReference type="ChEBI" id="CHEBI:30616"/>
        <dbReference type="ChEBI" id="CHEBI:33019"/>
        <dbReference type="ChEBI" id="CHEBI:57762"/>
        <dbReference type="ChEBI" id="CHEBI:78442"/>
        <dbReference type="ChEBI" id="CHEBI:78537"/>
        <dbReference type="ChEBI" id="CHEBI:456215"/>
        <dbReference type="EC" id="6.1.1.9"/>
    </reaction>
</comment>
<comment type="subunit">
    <text evidence="1">Monomer.</text>
</comment>
<comment type="subcellular location">
    <subcellularLocation>
        <location evidence="1">Cytoplasm</location>
    </subcellularLocation>
</comment>
<comment type="domain">
    <text evidence="1">ValRS has two distinct active sites: one for aminoacylation and one for editing. The misactivated threonine is translocated from the active site to the editing site.</text>
</comment>
<comment type="domain">
    <text evidence="1">The C-terminal coiled-coil domain is crucial for aminoacylation activity.</text>
</comment>
<comment type="similarity">
    <text evidence="1">Belongs to the class-I aminoacyl-tRNA synthetase family. ValS type 1 subfamily.</text>
</comment>
<sequence>MPMEKTFDPAAIEAKWARLWESRGLFRPHRPDATPFTIVNPPPNVTGALHIGHALDNTLQDVLIRYERLRGKDALWVVGTDHAGIATQMVVERQLNERQQKRTDFTRDEFVDKVWEWKATSGGQITRQLRRLGCSMDWSREQFTMDPHFTRAVVKVFVDLHKKGLIYRDKRLVNWDPKLKTAISDLEVETHEVQGGFWHFKYPLADGVKLDDGHDHIVVATTRPETMLADMAVAVHPDDARYKSVIGKFVELPITGRRVPVVADEHADPELGSGAVKITPGHDFNDFEVGKRAGFKPAEMLNMFDGDANVIQTADGLIPAEYLGLHRFKRDGIDGARELVVQRMKETGFLIPHTDKDGNAHDAEPRTIQTPFGDRGGVVIEPWLTDQWYVDAEKLAQAPIQAVRDGRIQIVPKTWEKTFFNWMENIQPWCVSRQLWWGHRIPAWYAEDGRTFVAETEEEAQAEAGAGVILTRDPDVLDTWFSSALWPFATLGWPDDTELLKRHYPNDVLISGFDILFFWDARMAMQGMEFMGEVPWRTLYLHGLVRAPDGQKMSKSKGNVVDPIGLIDQYGADALRFFMCAMESQGRDIKMDDARLAGYRNFATKLWNAARFCEANGIAASTSLEAPAATLPVNRWIIGEVADTVAAVEAAFAAYRFDDAANAIYSFAWDRFCDWYLELIKPVLSQKPSPLQGRGLGEGDEAVPAPADGPLSPALSPEGEREIAETRAVAGWVLDQILVMLHPFMPFITEELWTGLGDRADYPLITAKWPAPNAARDAAASADIDWLIKLVSELRTAKAELGLPPGARLTAHFPASLKDRADKLAAQLDRLARLETISFDPAPAGASAQLVVEGETITIPLEGVIDIAAERERLTRALAAATKERDSLAGRLNNPSFVERAKPEAVEKARTDHAAKEAEADRLSAALARLG</sequence>
<keyword id="KW-0030">Aminoacyl-tRNA synthetase</keyword>
<keyword id="KW-0067">ATP-binding</keyword>
<keyword id="KW-0175">Coiled coil</keyword>
<keyword id="KW-0963">Cytoplasm</keyword>
<keyword id="KW-0436">Ligase</keyword>
<keyword id="KW-0547">Nucleotide-binding</keyword>
<keyword id="KW-0648">Protein biosynthesis</keyword>
<keyword id="KW-1185">Reference proteome</keyword>
<accession>Q1GUM2</accession>
<protein>
    <recommendedName>
        <fullName evidence="1">Valine--tRNA ligase</fullName>
        <ecNumber evidence="1">6.1.1.9</ecNumber>
    </recommendedName>
    <alternativeName>
        <fullName evidence="1">Valyl-tRNA synthetase</fullName>
        <shortName evidence="1">ValRS</shortName>
    </alternativeName>
</protein>
<feature type="chain" id="PRO_1000022174" description="Valine--tRNA ligase">
    <location>
        <begin position="1"/>
        <end position="931"/>
    </location>
</feature>
<feature type="region of interest" description="Disordered" evidence="2">
    <location>
        <begin position="351"/>
        <end position="370"/>
    </location>
</feature>
<feature type="region of interest" description="Disordered" evidence="2">
    <location>
        <begin position="691"/>
        <end position="717"/>
    </location>
</feature>
<feature type="coiled-coil region" evidence="1">
    <location>
        <begin position="864"/>
        <end position="930"/>
    </location>
</feature>
<feature type="short sequence motif" description="'HIGH' region">
    <location>
        <begin position="43"/>
        <end position="53"/>
    </location>
</feature>
<feature type="short sequence motif" description="'KMSKS' region">
    <location>
        <begin position="552"/>
        <end position="556"/>
    </location>
</feature>
<feature type="compositionally biased region" description="Basic and acidic residues" evidence="2">
    <location>
        <begin position="353"/>
        <end position="365"/>
    </location>
</feature>
<feature type="binding site" evidence="1">
    <location>
        <position position="555"/>
    </location>
    <ligand>
        <name>ATP</name>
        <dbReference type="ChEBI" id="CHEBI:30616"/>
    </ligand>
</feature>
<dbReference type="EC" id="6.1.1.9" evidence="1"/>
<dbReference type="EMBL" id="CP000356">
    <property type="protein sequence ID" value="ABF52650.1"/>
    <property type="molecule type" value="Genomic_DNA"/>
</dbReference>
<dbReference type="RefSeq" id="WP_011541238.1">
    <property type="nucleotide sequence ID" value="NC_008048.1"/>
</dbReference>
<dbReference type="SMR" id="Q1GUM2"/>
<dbReference type="STRING" id="317655.Sala_0932"/>
<dbReference type="KEGG" id="sal:Sala_0932"/>
<dbReference type="eggNOG" id="COG0525">
    <property type="taxonomic scope" value="Bacteria"/>
</dbReference>
<dbReference type="HOGENOM" id="CLU_001493_0_2_5"/>
<dbReference type="OrthoDB" id="9810365at2"/>
<dbReference type="Proteomes" id="UP000006578">
    <property type="component" value="Chromosome"/>
</dbReference>
<dbReference type="GO" id="GO:0005829">
    <property type="term" value="C:cytosol"/>
    <property type="evidence" value="ECO:0007669"/>
    <property type="project" value="TreeGrafter"/>
</dbReference>
<dbReference type="GO" id="GO:0002161">
    <property type="term" value="F:aminoacyl-tRNA deacylase activity"/>
    <property type="evidence" value="ECO:0007669"/>
    <property type="project" value="InterPro"/>
</dbReference>
<dbReference type="GO" id="GO:0005524">
    <property type="term" value="F:ATP binding"/>
    <property type="evidence" value="ECO:0007669"/>
    <property type="project" value="UniProtKB-UniRule"/>
</dbReference>
<dbReference type="GO" id="GO:0004832">
    <property type="term" value="F:valine-tRNA ligase activity"/>
    <property type="evidence" value="ECO:0007669"/>
    <property type="project" value="UniProtKB-UniRule"/>
</dbReference>
<dbReference type="GO" id="GO:0006438">
    <property type="term" value="P:valyl-tRNA aminoacylation"/>
    <property type="evidence" value="ECO:0007669"/>
    <property type="project" value="UniProtKB-UniRule"/>
</dbReference>
<dbReference type="CDD" id="cd07962">
    <property type="entry name" value="Anticodon_Ia_Val"/>
    <property type="match status" value="1"/>
</dbReference>
<dbReference type="CDD" id="cd00817">
    <property type="entry name" value="ValRS_core"/>
    <property type="match status" value="1"/>
</dbReference>
<dbReference type="FunFam" id="1.10.287.380:FF:000001">
    <property type="entry name" value="Valine--tRNA ligase"/>
    <property type="match status" value="1"/>
</dbReference>
<dbReference type="FunFam" id="3.40.50.620:FF:000032">
    <property type="entry name" value="Valine--tRNA ligase"/>
    <property type="match status" value="1"/>
</dbReference>
<dbReference type="FunFam" id="3.90.740.10:FF:000003">
    <property type="entry name" value="Valine--tRNA ligase"/>
    <property type="match status" value="1"/>
</dbReference>
<dbReference type="Gene3D" id="3.40.50.620">
    <property type="entry name" value="HUPs"/>
    <property type="match status" value="2"/>
</dbReference>
<dbReference type="Gene3D" id="1.10.730.10">
    <property type="entry name" value="Isoleucyl-tRNA Synthetase, Domain 1"/>
    <property type="match status" value="1"/>
</dbReference>
<dbReference type="Gene3D" id="1.10.287.380">
    <property type="entry name" value="Valyl-tRNA synthetase, C-terminal domain"/>
    <property type="match status" value="1"/>
</dbReference>
<dbReference type="Gene3D" id="3.90.740.10">
    <property type="entry name" value="Valyl/Leucyl/Isoleucyl-tRNA synthetase, editing domain"/>
    <property type="match status" value="1"/>
</dbReference>
<dbReference type="HAMAP" id="MF_02004">
    <property type="entry name" value="Val_tRNA_synth_type1"/>
    <property type="match status" value="1"/>
</dbReference>
<dbReference type="InterPro" id="IPR001412">
    <property type="entry name" value="aa-tRNA-synth_I_CS"/>
</dbReference>
<dbReference type="InterPro" id="IPR002300">
    <property type="entry name" value="aa-tRNA-synth_Ia"/>
</dbReference>
<dbReference type="InterPro" id="IPR033705">
    <property type="entry name" value="Anticodon_Ia_Val"/>
</dbReference>
<dbReference type="InterPro" id="IPR013155">
    <property type="entry name" value="M/V/L/I-tRNA-synth_anticd-bd"/>
</dbReference>
<dbReference type="InterPro" id="IPR014729">
    <property type="entry name" value="Rossmann-like_a/b/a_fold"/>
</dbReference>
<dbReference type="InterPro" id="IPR010978">
    <property type="entry name" value="tRNA-bd_arm"/>
</dbReference>
<dbReference type="InterPro" id="IPR009080">
    <property type="entry name" value="tRNAsynth_Ia_anticodon-bd"/>
</dbReference>
<dbReference type="InterPro" id="IPR037118">
    <property type="entry name" value="Val-tRNA_synth_C_sf"/>
</dbReference>
<dbReference type="InterPro" id="IPR019499">
    <property type="entry name" value="Val-tRNA_synth_tRNA-bd"/>
</dbReference>
<dbReference type="InterPro" id="IPR009008">
    <property type="entry name" value="Val/Leu/Ile-tRNA-synth_edit"/>
</dbReference>
<dbReference type="InterPro" id="IPR002303">
    <property type="entry name" value="Valyl-tRNA_ligase"/>
</dbReference>
<dbReference type="NCBIfam" id="NF004349">
    <property type="entry name" value="PRK05729.1"/>
    <property type="match status" value="1"/>
</dbReference>
<dbReference type="NCBIfam" id="TIGR00422">
    <property type="entry name" value="valS"/>
    <property type="match status" value="1"/>
</dbReference>
<dbReference type="PANTHER" id="PTHR11946:SF93">
    <property type="entry name" value="VALINE--TRNA LIGASE, CHLOROPLASTIC_MITOCHONDRIAL 2"/>
    <property type="match status" value="1"/>
</dbReference>
<dbReference type="PANTHER" id="PTHR11946">
    <property type="entry name" value="VALYL-TRNA SYNTHETASES"/>
    <property type="match status" value="1"/>
</dbReference>
<dbReference type="Pfam" id="PF08264">
    <property type="entry name" value="Anticodon_1"/>
    <property type="match status" value="2"/>
</dbReference>
<dbReference type="Pfam" id="PF00133">
    <property type="entry name" value="tRNA-synt_1"/>
    <property type="match status" value="1"/>
</dbReference>
<dbReference type="Pfam" id="PF10458">
    <property type="entry name" value="Val_tRNA-synt_C"/>
    <property type="match status" value="1"/>
</dbReference>
<dbReference type="PRINTS" id="PR00986">
    <property type="entry name" value="TRNASYNTHVAL"/>
</dbReference>
<dbReference type="SUPFAM" id="SSF47323">
    <property type="entry name" value="Anticodon-binding domain of a subclass of class I aminoacyl-tRNA synthetases"/>
    <property type="match status" value="1"/>
</dbReference>
<dbReference type="SUPFAM" id="SSF52374">
    <property type="entry name" value="Nucleotidylyl transferase"/>
    <property type="match status" value="1"/>
</dbReference>
<dbReference type="SUPFAM" id="SSF46589">
    <property type="entry name" value="tRNA-binding arm"/>
    <property type="match status" value="1"/>
</dbReference>
<dbReference type="SUPFAM" id="SSF50677">
    <property type="entry name" value="ValRS/IleRS/LeuRS editing domain"/>
    <property type="match status" value="1"/>
</dbReference>
<dbReference type="PROSITE" id="PS00178">
    <property type="entry name" value="AA_TRNA_LIGASE_I"/>
    <property type="match status" value="1"/>
</dbReference>